<feature type="signal peptide" evidence="1">
    <location>
        <begin position="1"/>
        <end position="20"/>
    </location>
</feature>
<feature type="chain" id="PRO_5000316136" description="UPF0319 protein YPK_2623">
    <location>
        <begin position="21"/>
        <end position="226"/>
    </location>
</feature>
<reference key="1">
    <citation type="submission" date="2008-02" db="EMBL/GenBank/DDBJ databases">
        <title>Complete sequence of Yersinia pseudotuberculosis YPIII.</title>
        <authorList>
            <consortium name="US DOE Joint Genome Institute"/>
            <person name="Copeland A."/>
            <person name="Lucas S."/>
            <person name="Lapidus A."/>
            <person name="Glavina del Rio T."/>
            <person name="Dalin E."/>
            <person name="Tice H."/>
            <person name="Bruce D."/>
            <person name="Goodwin L."/>
            <person name="Pitluck S."/>
            <person name="Munk A.C."/>
            <person name="Brettin T."/>
            <person name="Detter J.C."/>
            <person name="Han C."/>
            <person name="Tapia R."/>
            <person name="Schmutz J."/>
            <person name="Larimer F."/>
            <person name="Land M."/>
            <person name="Hauser L."/>
            <person name="Challacombe J.F."/>
            <person name="Green L."/>
            <person name="Lindler L.E."/>
            <person name="Nikolich M.P."/>
            <person name="Richardson P."/>
        </authorList>
    </citation>
    <scope>NUCLEOTIDE SEQUENCE [LARGE SCALE GENOMIC DNA]</scope>
    <source>
        <strain>YPIII</strain>
    </source>
</reference>
<gene>
    <name type="ordered locus">YPK_2623</name>
</gene>
<keyword id="KW-0732">Signal</keyword>
<accession>B1JQP9</accession>
<dbReference type="EMBL" id="CP000950">
    <property type="protein sequence ID" value="ACA68900.1"/>
    <property type="molecule type" value="Genomic_DNA"/>
</dbReference>
<dbReference type="RefSeq" id="WP_002213058.1">
    <property type="nucleotide sequence ID" value="NZ_CP009792.1"/>
</dbReference>
<dbReference type="KEGG" id="ypy:YPK_2623"/>
<dbReference type="PATRIC" id="fig|502800.11.peg.3322"/>
<dbReference type="HAMAP" id="MF_00789">
    <property type="entry name" value="UPF0319"/>
    <property type="match status" value="1"/>
</dbReference>
<dbReference type="InterPro" id="IPR018635">
    <property type="entry name" value="UPF0319"/>
</dbReference>
<dbReference type="NCBIfam" id="NF002967">
    <property type="entry name" value="PRK03641.1"/>
    <property type="match status" value="1"/>
</dbReference>
<dbReference type="PANTHER" id="PTHR38108">
    <property type="entry name" value="UPF0319 PROTEIN YCCT"/>
    <property type="match status" value="1"/>
</dbReference>
<dbReference type="PANTHER" id="PTHR38108:SF1">
    <property type="entry name" value="UPF0319 PROTEIN YCCT"/>
    <property type="match status" value="1"/>
</dbReference>
<dbReference type="Pfam" id="PF09829">
    <property type="entry name" value="DUF2057"/>
    <property type="match status" value="1"/>
</dbReference>
<name>Y2623_YERPY</name>
<proteinExistence type="inferred from homology"/>
<comment type="similarity">
    <text evidence="1">Belongs to the UPF0319 family.</text>
</comment>
<protein>
    <recommendedName>
        <fullName evidence="1">UPF0319 protein YPK_2623</fullName>
    </recommendedName>
</protein>
<sequence length="226" mass="24613">MKLGLVAGMLAVCFSFSSVAMTLKLTPEIDLLVVDGKNMSGSLLKGADSLELNSGMHQILFKVIKPLPTDPLVLYSSPPLIVVFNAHNTRSVAIKLPVINTLRDGHQFSKNPLYQLIGDNGHPLSVRHDVLRQDHLNNSTTLETVMAAYNVGKYNASVPAFAAIPPSPVSAVPGTTIPVAGVNTPHKTASLQGENVTEQMLQYWFLQANPETQKRFLIWAKKQPIH</sequence>
<evidence type="ECO:0000255" key="1">
    <source>
        <dbReference type="HAMAP-Rule" id="MF_00789"/>
    </source>
</evidence>
<organism>
    <name type="scientific">Yersinia pseudotuberculosis serotype O:3 (strain YPIII)</name>
    <dbReference type="NCBI Taxonomy" id="502800"/>
    <lineage>
        <taxon>Bacteria</taxon>
        <taxon>Pseudomonadati</taxon>
        <taxon>Pseudomonadota</taxon>
        <taxon>Gammaproteobacteria</taxon>
        <taxon>Enterobacterales</taxon>
        <taxon>Yersiniaceae</taxon>
        <taxon>Yersinia</taxon>
    </lineage>
</organism>